<reference key="1">
    <citation type="journal article" date="2006" name="Nature">
        <title>The DNA sequence, annotation and analysis of human chromosome 3.</title>
        <authorList>
            <person name="Muzny D.M."/>
            <person name="Scherer S.E."/>
            <person name="Kaul R."/>
            <person name="Wang J."/>
            <person name="Yu J."/>
            <person name="Sudbrak R."/>
            <person name="Buhay C.J."/>
            <person name="Chen R."/>
            <person name="Cree A."/>
            <person name="Ding Y."/>
            <person name="Dugan-Rocha S."/>
            <person name="Gill R."/>
            <person name="Gunaratne P."/>
            <person name="Harris R.A."/>
            <person name="Hawes A.C."/>
            <person name="Hernandez J."/>
            <person name="Hodgson A.V."/>
            <person name="Hume J."/>
            <person name="Jackson A."/>
            <person name="Khan Z.M."/>
            <person name="Kovar-Smith C."/>
            <person name="Lewis L.R."/>
            <person name="Lozado R.J."/>
            <person name="Metzker M.L."/>
            <person name="Milosavljevic A."/>
            <person name="Miner G.R."/>
            <person name="Morgan M.B."/>
            <person name="Nazareth L.V."/>
            <person name="Scott G."/>
            <person name="Sodergren E."/>
            <person name="Song X.-Z."/>
            <person name="Steffen D."/>
            <person name="Wei S."/>
            <person name="Wheeler D.A."/>
            <person name="Wright M.W."/>
            <person name="Worley K.C."/>
            <person name="Yuan Y."/>
            <person name="Zhang Z."/>
            <person name="Adams C.Q."/>
            <person name="Ansari-Lari M.A."/>
            <person name="Ayele M."/>
            <person name="Brown M.J."/>
            <person name="Chen G."/>
            <person name="Chen Z."/>
            <person name="Clendenning J."/>
            <person name="Clerc-Blankenburg K.P."/>
            <person name="Chen R."/>
            <person name="Chen Z."/>
            <person name="Davis C."/>
            <person name="Delgado O."/>
            <person name="Dinh H.H."/>
            <person name="Dong W."/>
            <person name="Draper H."/>
            <person name="Ernst S."/>
            <person name="Fu G."/>
            <person name="Gonzalez-Garay M.L."/>
            <person name="Garcia D.K."/>
            <person name="Gillett W."/>
            <person name="Gu J."/>
            <person name="Hao B."/>
            <person name="Haugen E."/>
            <person name="Havlak P."/>
            <person name="He X."/>
            <person name="Hennig S."/>
            <person name="Hu S."/>
            <person name="Huang W."/>
            <person name="Jackson L.R."/>
            <person name="Jacob L.S."/>
            <person name="Kelly S.H."/>
            <person name="Kube M."/>
            <person name="Levy R."/>
            <person name="Li Z."/>
            <person name="Liu B."/>
            <person name="Liu J."/>
            <person name="Liu W."/>
            <person name="Lu J."/>
            <person name="Maheshwari M."/>
            <person name="Nguyen B.-V."/>
            <person name="Okwuonu G.O."/>
            <person name="Palmeiri A."/>
            <person name="Pasternak S."/>
            <person name="Perez L.M."/>
            <person name="Phelps K.A."/>
            <person name="Plopper F.J."/>
            <person name="Qiang B."/>
            <person name="Raymond C."/>
            <person name="Rodriguez R."/>
            <person name="Saenphimmachak C."/>
            <person name="Santibanez J."/>
            <person name="Shen H."/>
            <person name="Shen Y."/>
            <person name="Subramanian S."/>
            <person name="Tabor P.E."/>
            <person name="Verduzco D."/>
            <person name="Waldron L."/>
            <person name="Wang J."/>
            <person name="Wang J."/>
            <person name="Wang Q."/>
            <person name="Williams G.A."/>
            <person name="Wong G.K.-S."/>
            <person name="Yao Z."/>
            <person name="Zhang J."/>
            <person name="Zhang X."/>
            <person name="Zhao G."/>
            <person name="Zhou J."/>
            <person name="Zhou Y."/>
            <person name="Nelson D."/>
            <person name="Lehrach H."/>
            <person name="Reinhardt R."/>
            <person name="Naylor S.L."/>
            <person name="Yang H."/>
            <person name="Olson M."/>
            <person name="Weinstock G."/>
            <person name="Gibbs R.A."/>
        </authorList>
    </citation>
    <scope>NUCLEOTIDE SEQUENCE [LARGE SCALE GENOMIC DNA]</scope>
</reference>
<reference key="2">
    <citation type="journal article" date="2004" name="Genome Res.">
        <title>The status, quality, and expansion of the NIH full-length cDNA project: the Mammalian Gene Collection (MGC).</title>
        <authorList>
            <consortium name="The MGC Project Team"/>
        </authorList>
    </citation>
    <scope>NUCLEOTIDE SEQUENCE [LARGE SCALE MRNA]</scope>
    <source>
        <tissue>Brain</tissue>
    </source>
</reference>
<reference key="3">
    <citation type="journal article" date="2013" name="J. Proteome Res.">
        <title>Toward a comprehensive characterization of a human cancer cell phosphoproteome.</title>
        <authorList>
            <person name="Zhou H."/>
            <person name="Di Palma S."/>
            <person name="Preisinger C."/>
            <person name="Peng M."/>
            <person name="Polat A.N."/>
            <person name="Heck A.J."/>
            <person name="Mohammed S."/>
        </authorList>
    </citation>
    <scope>PHOSPHORYLATION [LARGE SCALE ANALYSIS] AT SER-197</scope>
    <scope>IDENTIFICATION BY MASS SPECTROMETRY [LARGE SCALE ANALYSIS]</scope>
    <source>
        <tissue>Cervix carcinoma</tissue>
        <tissue>Erythroleukemia</tissue>
    </source>
</reference>
<reference key="4">
    <citation type="journal article" date="2015" name="Hum. Mol. Genet.">
        <title>CDC174, a novel component of the exon junction complex whose mutation underlies a syndrome of hypotonia and psychomotor developmental delay.</title>
        <authorList>
            <person name="Volodarsky M."/>
            <person name="Lichtig H."/>
            <person name="Leibson T."/>
            <person name="Sadaka Y."/>
            <person name="Kadir R."/>
            <person name="Perez Y."/>
            <person name="Liani-Leibson K."/>
            <person name="Gradstein L."/>
            <person name="Shaco-Levy R."/>
            <person name="Shorer Z."/>
            <person name="Frank D."/>
            <person name="Birk O.S."/>
        </authorList>
    </citation>
    <scope>FUNCTION</scope>
    <scope>SUBCELLULAR LOCATION</scope>
    <scope>TISSUE SPECIFICITY</scope>
    <scope>INVOLVEMENT IN IHPMR</scope>
</reference>
<comment type="function">
    <text evidence="3">Probably involved in neuronal development.</text>
</comment>
<comment type="interaction">
    <interactant intactId="EBI-747830">
        <id>Q6PII3</id>
    </interactant>
    <interactant intactId="EBI-79934">
        <id>P09917</id>
        <label>ALOX5</label>
    </interactant>
    <organismsDiffer>false</organismsDiffer>
    <experiments>3</experiments>
</comment>
<comment type="interaction">
    <interactant intactId="EBI-747830">
        <id>Q6PII3</id>
    </interactant>
    <interactant intactId="EBI-299104">
        <id>P38919</id>
        <label>EIF4A3</label>
    </interactant>
    <organismsDiffer>false</organismsDiffer>
    <experiments>5</experiments>
</comment>
<comment type="interaction">
    <interactant intactId="EBI-747830">
        <id>Q6PII3</id>
    </interactant>
    <interactant intactId="EBI-747693">
        <id>P41227</id>
        <label>NAA10</label>
    </interactant>
    <organismsDiffer>false</organismsDiffer>
    <experiments>3</experiments>
</comment>
<comment type="subcellular location">
    <subcellularLocation>
        <location evidence="3">Nucleus</location>
    </subcellularLocation>
    <text evidence="3">In the nucleus of neuroblastoma cells, it colocalizes with EIF4A3, a component of exon junction complex.</text>
</comment>
<comment type="tissue specificity">
    <text evidence="3">Widely expressed.</text>
</comment>
<comment type="disease" evidence="3">
    <disease id="DI-04614">
        <name>Hypotonia, infantile, with psychomotor retardation</name>
        <acronym>IHPMR</acronym>
        <description>An autosomal recessive disorder characterized by congenital axial hypotonia, weakness of the abducens nerve, psychomotor developmental delay with brain ventriculomegaly, variable thinning of corpus callosum and cardiac septal defects.</description>
        <dbReference type="MIM" id="616816"/>
    </disease>
    <text>The disease is caused by variants affecting the gene represented in this entry.</text>
</comment>
<name>CC174_HUMAN</name>
<gene>
    <name type="primary">CCDC174</name>
    <name type="synonym">C3orf19</name>
</gene>
<sequence length="467" mass="53958">MDRRKKPLDVTASSLVDLKAELFRKQEEFKQEKLLKDSGVFGKPKTTNKKPSIWSKQNVGVSNRAEKDAEQKIEEQKTLDKAREKLEEKAKLYEKMTKGDFIDEEVEDMYLVDFTQKIIDKRKEMEASGAHRDSQKAGERDDDEENLPEGEIPPPQDPSEEWVDYVDSLGRSRRCMRKDLPDLLEMDKNLQGRLFISPANEKTLLSEDMRKELQRQQWEEEEREALKRPMGPVHYEDIRENEARQLGVGYFAFARDKELRNKQMKTLEMLREQTTDQRTKRENIKEKRKAILEARLAKLRQKKMKKSKEGGTEEENRDGDVIGPLPPEPEAVPTPRPAAQSSKVEVIVQERKDTKPGVPHIREWDRGKEFSFGYWSKRQSDLRAERDPEFAPPSDYFVGQKRTGFSSSQAWSRPGPAQSDPGQCPDQSHGPSPEHTSPTPAPDNPPQAPTVTFKTLDDMISYYKQVT</sequence>
<feature type="chain" id="PRO_0000251956" description="Coiled-coil domain-containing protein 174">
    <location>
        <begin position="1"/>
        <end position="467"/>
    </location>
</feature>
<feature type="region of interest" description="Disordered" evidence="2">
    <location>
        <begin position="40"/>
        <end position="77"/>
    </location>
</feature>
<feature type="region of interest" description="Disordered" evidence="2">
    <location>
        <begin position="124"/>
        <end position="162"/>
    </location>
</feature>
<feature type="region of interest" description="Disordered" evidence="2">
    <location>
        <begin position="299"/>
        <end position="363"/>
    </location>
</feature>
<feature type="region of interest" description="Disordered" evidence="2">
    <location>
        <begin position="378"/>
        <end position="453"/>
    </location>
</feature>
<feature type="coiled-coil region" evidence="1">
    <location>
        <begin position="63"/>
        <end position="99"/>
    </location>
</feature>
<feature type="coiled-coil region" evidence="1">
    <location>
        <begin position="267"/>
        <end position="309"/>
    </location>
</feature>
<feature type="compositionally biased region" description="Basic and acidic residues" evidence="2">
    <location>
        <begin position="64"/>
        <end position="77"/>
    </location>
</feature>
<feature type="compositionally biased region" description="Basic and acidic residues" evidence="2">
    <location>
        <begin position="124"/>
        <end position="139"/>
    </location>
</feature>
<feature type="compositionally biased region" description="Pro residues" evidence="2">
    <location>
        <begin position="324"/>
        <end position="336"/>
    </location>
</feature>
<feature type="compositionally biased region" description="Basic and acidic residues" evidence="2">
    <location>
        <begin position="348"/>
        <end position="363"/>
    </location>
</feature>
<feature type="compositionally biased region" description="Basic and acidic residues" evidence="2">
    <location>
        <begin position="378"/>
        <end position="389"/>
    </location>
</feature>
<feature type="compositionally biased region" description="Polar residues" evidence="2">
    <location>
        <begin position="425"/>
        <end position="437"/>
    </location>
</feature>
<feature type="compositionally biased region" description="Pro residues" evidence="2">
    <location>
        <begin position="439"/>
        <end position="448"/>
    </location>
</feature>
<feature type="modified residue" description="Phosphoserine" evidence="5">
    <location>
        <position position="197"/>
    </location>
</feature>
<feature type="sequence variant" id="VAR_061573" description="In dbSNP:rs60239620.">
    <original>T</original>
    <variation>M</variation>
    <location>
        <position position="436"/>
    </location>
</feature>
<feature type="sequence conflict" description="In Ref. 1; AAH33897." evidence="4" ref="1">
    <original>P</original>
    <variation>H</variation>
    <location>
        <position position="158"/>
    </location>
</feature>
<accession>Q6PII3</accession>
<accession>Q96CS5</accession>
<proteinExistence type="evidence at protein level"/>
<keyword id="KW-0175">Coiled coil</keyword>
<keyword id="KW-0539">Nucleus</keyword>
<keyword id="KW-0597">Phosphoprotein</keyword>
<keyword id="KW-1267">Proteomics identification</keyword>
<keyword id="KW-1185">Reference proteome</keyword>
<protein>
    <recommendedName>
        <fullName>Coiled-coil domain-containing protein 174</fullName>
    </recommendedName>
</protein>
<dbReference type="EMBL" id="AC090952">
    <property type="status" value="NOT_ANNOTATED_CDS"/>
    <property type="molecule type" value="Genomic_DNA"/>
</dbReference>
<dbReference type="EMBL" id="BC013999">
    <property type="protein sequence ID" value="AAH13999.2"/>
    <property type="molecule type" value="mRNA"/>
</dbReference>
<dbReference type="EMBL" id="BC033897">
    <property type="protein sequence ID" value="AAH33897.2"/>
    <property type="molecule type" value="mRNA"/>
</dbReference>
<dbReference type="CCDS" id="CCDS2620.2"/>
<dbReference type="RefSeq" id="NP_057558.3">
    <property type="nucleotide sequence ID" value="NM_016474.4"/>
</dbReference>
<dbReference type="SMR" id="Q6PII3"/>
<dbReference type="BioGRID" id="119402">
    <property type="interactions" value="48"/>
</dbReference>
<dbReference type="FunCoup" id="Q6PII3">
    <property type="interactions" value="3093"/>
</dbReference>
<dbReference type="IntAct" id="Q6PII3">
    <property type="interactions" value="28"/>
</dbReference>
<dbReference type="STRING" id="9606.ENSP00000373304"/>
<dbReference type="GlyGen" id="Q6PII3">
    <property type="glycosylation" value="1 site"/>
</dbReference>
<dbReference type="iPTMnet" id="Q6PII3"/>
<dbReference type="PhosphoSitePlus" id="Q6PII3"/>
<dbReference type="BioMuta" id="CCDC174"/>
<dbReference type="DMDM" id="126302528"/>
<dbReference type="jPOST" id="Q6PII3"/>
<dbReference type="MassIVE" id="Q6PII3"/>
<dbReference type="PaxDb" id="9606-ENSP00000373304"/>
<dbReference type="PeptideAtlas" id="Q6PII3"/>
<dbReference type="ProteomicsDB" id="67157"/>
<dbReference type="Pumba" id="Q6PII3"/>
<dbReference type="Antibodypedia" id="45072">
    <property type="antibodies" value="49 antibodies from 10 providers"/>
</dbReference>
<dbReference type="DNASU" id="51244"/>
<dbReference type="Ensembl" id="ENST00000383794.7">
    <property type="protein sequence ID" value="ENSP00000373304.3"/>
    <property type="gene ID" value="ENSG00000154781.17"/>
</dbReference>
<dbReference type="GeneID" id="51244"/>
<dbReference type="KEGG" id="hsa:51244"/>
<dbReference type="MANE-Select" id="ENST00000383794.7">
    <property type="protein sequence ID" value="ENSP00000373304.3"/>
    <property type="RefSeq nucleotide sequence ID" value="NM_016474.5"/>
    <property type="RefSeq protein sequence ID" value="NP_057558.3"/>
</dbReference>
<dbReference type="UCSC" id="uc003byw.4">
    <property type="organism name" value="human"/>
</dbReference>
<dbReference type="AGR" id="HGNC:28033"/>
<dbReference type="CTD" id="51244"/>
<dbReference type="DisGeNET" id="51244"/>
<dbReference type="GeneCards" id="CCDC174"/>
<dbReference type="HGNC" id="HGNC:28033">
    <property type="gene designation" value="CCDC174"/>
</dbReference>
<dbReference type="HPA" id="ENSG00000154781">
    <property type="expression patterns" value="Low tissue specificity"/>
</dbReference>
<dbReference type="MalaCards" id="CCDC174"/>
<dbReference type="MIM" id="616735">
    <property type="type" value="gene"/>
</dbReference>
<dbReference type="MIM" id="616816">
    <property type="type" value="phenotype"/>
</dbReference>
<dbReference type="neXtProt" id="NX_Q6PII3"/>
<dbReference type="OpenTargets" id="ENSG00000154781"/>
<dbReference type="Orphanet" id="467176">
    <property type="disease" value="Severe hypotonia-psychomotor developmental delay-strabismus-cardiac septal defect syndrome"/>
</dbReference>
<dbReference type="PharmGKB" id="PA134914840"/>
<dbReference type="VEuPathDB" id="HostDB:ENSG00000154781"/>
<dbReference type="eggNOG" id="ENOG502QWJ9">
    <property type="taxonomic scope" value="Eukaryota"/>
</dbReference>
<dbReference type="GeneTree" id="ENSGT00440000033958"/>
<dbReference type="HOGENOM" id="CLU_037216_1_0_1"/>
<dbReference type="InParanoid" id="Q6PII3"/>
<dbReference type="OMA" id="PEMRPWD"/>
<dbReference type="OrthoDB" id="333551at2759"/>
<dbReference type="PAN-GO" id="Q6PII3">
    <property type="GO annotations" value="1 GO annotation based on evolutionary models"/>
</dbReference>
<dbReference type="PhylomeDB" id="Q6PII3"/>
<dbReference type="TreeFam" id="TF323679"/>
<dbReference type="PathwayCommons" id="Q6PII3"/>
<dbReference type="SignaLink" id="Q6PII3"/>
<dbReference type="BioGRID-ORCS" id="51244">
    <property type="hits" value="498 hits in 1172 CRISPR screens"/>
</dbReference>
<dbReference type="ChiTaRS" id="CCDC174">
    <property type="organism name" value="human"/>
</dbReference>
<dbReference type="GenomeRNAi" id="51244"/>
<dbReference type="Pharos" id="Q6PII3">
    <property type="development level" value="Tdark"/>
</dbReference>
<dbReference type="PRO" id="PR:Q6PII3"/>
<dbReference type="Proteomes" id="UP000005640">
    <property type="component" value="Chromosome 3"/>
</dbReference>
<dbReference type="RNAct" id="Q6PII3">
    <property type="molecule type" value="protein"/>
</dbReference>
<dbReference type="Bgee" id="ENSG00000154781">
    <property type="expression patterns" value="Expressed in calcaneal tendon and 175 other cell types or tissues"/>
</dbReference>
<dbReference type="ExpressionAtlas" id="Q6PII3">
    <property type="expression patterns" value="baseline and differential"/>
</dbReference>
<dbReference type="GO" id="GO:0005654">
    <property type="term" value="C:nucleoplasm"/>
    <property type="evidence" value="ECO:0000314"/>
    <property type="project" value="HPA"/>
</dbReference>
<dbReference type="GO" id="GO:0005634">
    <property type="term" value="C:nucleus"/>
    <property type="evidence" value="ECO:0000314"/>
    <property type="project" value="UniProtKB"/>
</dbReference>
<dbReference type="InterPro" id="IPR025066">
    <property type="entry name" value="CCDC174-like"/>
</dbReference>
<dbReference type="PANTHER" id="PTHR15885">
    <property type="entry name" value="COILED-COIL DOMAIN-CONTAINING PROTEIN 174"/>
    <property type="match status" value="1"/>
</dbReference>
<dbReference type="PANTHER" id="PTHR15885:SF1">
    <property type="entry name" value="COILED-COIL DOMAIN-CONTAINING PROTEIN 174"/>
    <property type="match status" value="1"/>
</dbReference>
<dbReference type="Pfam" id="PF25449">
    <property type="entry name" value="CCDC174_GRSR"/>
    <property type="match status" value="1"/>
</dbReference>
<dbReference type="Pfam" id="PF13300">
    <property type="entry name" value="DUF4078"/>
    <property type="match status" value="1"/>
</dbReference>
<evidence type="ECO:0000255" key="1"/>
<evidence type="ECO:0000256" key="2">
    <source>
        <dbReference type="SAM" id="MobiDB-lite"/>
    </source>
</evidence>
<evidence type="ECO:0000269" key="3">
    <source>
    </source>
</evidence>
<evidence type="ECO:0000305" key="4"/>
<evidence type="ECO:0007744" key="5">
    <source>
    </source>
</evidence>
<organism>
    <name type="scientific">Homo sapiens</name>
    <name type="common">Human</name>
    <dbReference type="NCBI Taxonomy" id="9606"/>
    <lineage>
        <taxon>Eukaryota</taxon>
        <taxon>Metazoa</taxon>
        <taxon>Chordata</taxon>
        <taxon>Craniata</taxon>
        <taxon>Vertebrata</taxon>
        <taxon>Euteleostomi</taxon>
        <taxon>Mammalia</taxon>
        <taxon>Eutheria</taxon>
        <taxon>Euarchontoglires</taxon>
        <taxon>Primates</taxon>
        <taxon>Haplorrhini</taxon>
        <taxon>Catarrhini</taxon>
        <taxon>Hominidae</taxon>
        <taxon>Homo</taxon>
    </lineage>
</organism>